<comment type="function">
    <text>Functions as a component of the nuclear pore complex (NPC). NPC components, collectively referred to as nucleoporins (NUPs), can play the role of both NPC structural components and of docking or interaction partners for transiently associated nuclear transport factors. Active directional transport is assured by both, a Phe-Gly (FG) repeat affinity gradient for these transport factors across the NPC and a transport cofactor concentration gradient across the nuclear envelope.</text>
</comment>
<comment type="subunit">
    <text evidence="1">Component of the npc107-120 complex which consists of nup85, nup107, nup120, nup131, nup132 and seh1. Interacts with nup107.</text>
</comment>
<comment type="interaction">
    <interactant intactId="EBI-295769">
        <id>Q9P797</id>
    </interactant>
    <interactant intactId="EBI-295788">
        <id>Q10331</id>
        <label>nup107</label>
    </interactant>
    <organismsDiffer>false</organismsDiffer>
    <experiments>2</experiments>
</comment>
<comment type="subcellular location">
    <subcellularLocation>
        <location evidence="1 2">Nucleus</location>
    </subcellularLocation>
    <text>Nuclear rim.</text>
</comment>
<comment type="similarity">
    <text evidence="3">Belongs to the nucleoporin Nup133 family.</text>
</comment>
<protein>
    <recommendedName>
        <fullName>Nucleoporin nup131</fullName>
    </recommendedName>
    <alternativeName>
        <fullName>Nuclear pore protein nup131</fullName>
    </alternativeName>
</protein>
<keyword id="KW-0539">Nucleus</keyword>
<keyword id="KW-1185">Reference proteome</keyword>
<keyword id="KW-0813">Transport</keyword>
<evidence type="ECO:0000269" key="1">
    <source>
    </source>
</evidence>
<evidence type="ECO:0000269" key="2">
    <source>
    </source>
</evidence>
<evidence type="ECO:0000305" key="3"/>
<gene>
    <name type="primary">nup131</name>
    <name type="synonym">nup133a</name>
    <name type="ORF">SPBP35G2.06c</name>
</gene>
<reference key="1">
    <citation type="journal article" date="2002" name="Nature">
        <title>The genome sequence of Schizosaccharomyces pombe.</title>
        <authorList>
            <person name="Wood V."/>
            <person name="Gwilliam R."/>
            <person name="Rajandream M.A."/>
            <person name="Lyne M.H."/>
            <person name="Lyne R."/>
            <person name="Stewart A."/>
            <person name="Sgouros J.G."/>
            <person name="Peat N."/>
            <person name="Hayles J."/>
            <person name="Baker S.G."/>
            <person name="Basham D."/>
            <person name="Bowman S."/>
            <person name="Brooks K."/>
            <person name="Brown D."/>
            <person name="Brown S."/>
            <person name="Chillingworth T."/>
            <person name="Churcher C.M."/>
            <person name="Collins M."/>
            <person name="Connor R."/>
            <person name="Cronin A."/>
            <person name="Davis P."/>
            <person name="Feltwell T."/>
            <person name="Fraser A."/>
            <person name="Gentles S."/>
            <person name="Goble A."/>
            <person name="Hamlin N."/>
            <person name="Harris D.E."/>
            <person name="Hidalgo J."/>
            <person name="Hodgson G."/>
            <person name="Holroyd S."/>
            <person name="Hornsby T."/>
            <person name="Howarth S."/>
            <person name="Huckle E.J."/>
            <person name="Hunt S."/>
            <person name="Jagels K."/>
            <person name="James K.D."/>
            <person name="Jones L."/>
            <person name="Jones M."/>
            <person name="Leather S."/>
            <person name="McDonald S."/>
            <person name="McLean J."/>
            <person name="Mooney P."/>
            <person name="Moule S."/>
            <person name="Mungall K.L."/>
            <person name="Murphy L.D."/>
            <person name="Niblett D."/>
            <person name="Odell C."/>
            <person name="Oliver K."/>
            <person name="O'Neil S."/>
            <person name="Pearson D."/>
            <person name="Quail M.A."/>
            <person name="Rabbinowitsch E."/>
            <person name="Rutherford K.M."/>
            <person name="Rutter S."/>
            <person name="Saunders D."/>
            <person name="Seeger K."/>
            <person name="Sharp S."/>
            <person name="Skelton J."/>
            <person name="Simmonds M.N."/>
            <person name="Squares R."/>
            <person name="Squares S."/>
            <person name="Stevens K."/>
            <person name="Taylor K."/>
            <person name="Taylor R.G."/>
            <person name="Tivey A."/>
            <person name="Walsh S.V."/>
            <person name="Warren T."/>
            <person name="Whitehead S."/>
            <person name="Woodward J.R."/>
            <person name="Volckaert G."/>
            <person name="Aert R."/>
            <person name="Robben J."/>
            <person name="Grymonprez B."/>
            <person name="Weltjens I."/>
            <person name="Vanstreels E."/>
            <person name="Rieger M."/>
            <person name="Schaefer M."/>
            <person name="Mueller-Auer S."/>
            <person name="Gabel C."/>
            <person name="Fuchs M."/>
            <person name="Duesterhoeft A."/>
            <person name="Fritzc C."/>
            <person name="Holzer E."/>
            <person name="Moestl D."/>
            <person name="Hilbert H."/>
            <person name="Borzym K."/>
            <person name="Langer I."/>
            <person name="Beck A."/>
            <person name="Lehrach H."/>
            <person name="Reinhardt R."/>
            <person name="Pohl T.M."/>
            <person name="Eger P."/>
            <person name="Zimmermann W."/>
            <person name="Wedler H."/>
            <person name="Wambutt R."/>
            <person name="Purnelle B."/>
            <person name="Goffeau A."/>
            <person name="Cadieu E."/>
            <person name="Dreano S."/>
            <person name="Gloux S."/>
            <person name="Lelaure V."/>
            <person name="Mottier S."/>
            <person name="Galibert F."/>
            <person name="Aves S.J."/>
            <person name="Xiang Z."/>
            <person name="Hunt C."/>
            <person name="Moore K."/>
            <person name="Hurst S.M."/>
            <person name="Lucas M."/>
            <person name="Rochet M."/>
            <person name="Gaillardin C."/>
            <person name="Tallada V.A."/>
            <person name="Garzon A."/>
            <person name="Thode G."/>
            <person name="Daga R.R."/>
            <person name="Cruzado L."/>
            <person name="Jimenez J."/>
            <person name="Sanchez M."/>
            <person name="del Rey F."/>
            <person name="Benito J."/>
            <person name="Dominguez A."/>
            <person name="Revuelta J.L."/>
            <person name="Moreno S."/>
            <person name="Armstrong J."/>
            <person name="Forsburg S.L."/>
            <person name="Cerutti L."/>
            <person name="Lowe T."/>
            <person name="McCombie W.R."/>
            <person name="Paulsen I."/>
            <person name="Potashkin J."/>
            <person name="Shpakovski G.V."/>
            <person name="Ussery D."/>
            <person name="Barrell B.G."/>
            <person name="Nurse P."/>
        </authorList>
    </citation>
    <scope>NUCLEOTIDE SEQUENCE [LARGE SCALE GENOMIC DNA]</scope>
    <source>
        <strain>972 / ATCC 24843</strain>
    </source>
</reference>
<reference key="2">
    <citation type="journal article" date="2011" name="Science">
        <title>Comparative functional genomics of the fission yeasts.</title>
        <authorList>
            <person name="Rhind N."/>
            <person name="Chen Z."/>
            <person name="Yassour M."/>
            <person name="Thompson D.A."/>
            <person name="Haas B.J."/>
            <person name="Habib N."/>
            <person name="Wapinski I."/>
            <person name="Roy S."/>
            <person name="Lin M.F."/>
            <person name="Heiman D.I."/>
            <person name="Young S.K."/>
            <person name="Furuya K."/>
            <person name="Guo Y."/>
            <person name="Pidoux A."/>
            <person name="Chen H.M."/>
            <person name="Robbertse B."/>
            <person name="Goldberg J.M."/>
            <person name="Aoki K."/>
            <person name="Bayne E.H."/>
            <person name="Berlin A.M."/>
            <person name="Desjardins C.A."/>
            <person name="Dobbs E."/>
            <person name="Dukaj L."/>
            <person name="Fan L."/>
            <person name="FitzGerald M.G."/>
            <person name="French C."/>
            <person name="Gujja S."/>
            <person name="Hansen K."/>
            <person name="Keifenheim D."/>
            <person name="Levin J.Z."/>
            <person name="Mosher R.A."/>
            <person name="Mueller C.A."/>
            <person name="Pfiffner J."/>
            <person name="Priest M."/>
            <person name="Russ C."/>
            <person name="Smialowska A."/>
            <person name="Swoboda P."/>
            <person name="Sykes S.M."/>
            <person name="Vaughn M."/>
            <person name="Vengrova S."/>
            <person name="Yoder R."/>
            <person name="Zeng Q."/>
            <person name="Allshire R."/>
            <person name="Baulcombe D."/>
            <person name="Birren B.W."/>
            <person name="Brown W."/>
            <person name="Ekwall K."/>
            <person name="Kellis M."/>
            <person name="Leatherwood J."/>
            <person name="Levin H."/>
            <person name="Margalit H."/>
            <person name="Martienssen R."/>
            <person name="Nieduszynski C.A."/>
            <person name="Spatafora J.W."/>
            <person name="Friedman N."/>
            <person name="Dalgaard J.Z."/>
            <person name="Baumann P."/>
            <person name="Niki H."/>
            <person name="Regev A."/>
            <person name="Nusbaum C."/>
        </authorList>
    </citation>
    <scope>REVISION OF GENE MODEL</scope>
</reference>
<reference key="3">
    <citation type="journal article" date="2004" name="Mol. Cell. Biol.">
        <title>The fission yeast Nup107-120 complex functionally interacts with the small GTPase Ran/Spi1 and is required for mRNA export, nuclear pore distribution, and proper cell division.</title>
        <authorList>
            <person name="Bai S.W."/>
            <person name="Rouquette J."/>
            <person name="Umeda M."/>
            <person name="Faigle W."/>
            <person name="Loew D."/>
            <person name="Sazer S."/>
            <person name="Doye V."/>
        </authorList>
    </citation>
    <scope>IDENTIFICATION IN NUP107-120 COMPLEX</scope>
    <scope>INTERACTION WITH NUP107</scope>
    <scope>SUBCELLULAR LOCATION</scope>
</reference>
<reference key="4">
    <citation type="journal article" date="2006" name="Nat. Biotechnol.">
        <title>ORFeome cloning and global analysis of protein localization in the fission yeast Schizosaccharomyces pombe.</title>
        <authorList>
            <person name="Matsuyama A."/>
            <person name="Arai R."/>
            <person name="Yashiroda Y."/>
            <person name="Shirai A."/>
            <person name="Kamata A."/>
            <person name="Sekido S."/>
            <person name="Kobayashi Y."/>
            <person name="Hashimoto A."/>
            <person name="Hamamoto M."/>
            <person name="Hiraoka Y."/>
            <person name="Horinouchi S."/>
            <person name="Yoshida M."/>
        </authorList>
    </citation>
    <scope>SUBCELLULAR LOCATION [LARGE SCALE ANALYSIS]</scope>
</reference>
<feature type="chain" id="PRO_0000290668" description="Nucleoporin nup131">
    <location>
        <begin position="1"/>
        <end position="1142"/>
    </location>
</feature>
<organism>
    <name type="scientific">Schizosaccharomyces pombe (strain 972 / ATCC 24843)</name>
    <name type="common">Fission yeast</name>
    <dbReference type="NCBI Taxonomy" id="284812"/>
    <lineage>
        <taxon>Eukaryota</taxon>
        <taxon>Fungi</taxon>
        <taxon>Dikarya</taxon>
        <taxon>Ascomycota</taxon>
        <taxon>Taphrinomycotina</taxon>
        <taxon>Schizosaccharomycetes</taxon>
        <taxon>Schizosaccharomycetales</taxon>
        <taxon>Schizosaccharomycetaceae</taxon>
        <taxon>Schizosaccharomyces</taxon>
    </lineage>
</organism>
<accession>Q9P797</accession>
<name>NU131_SCHPO</name>
<proteinExistence type="evidence at protein level"/>
<dbReference type="EMBL" id="CU329671">
    <property type="protein sequence ID" value="CAB87368.3"/>
    <property type="molecule type" value="Genomic_DNA"/>
</dbReference>
<dbReference type="RefSeq" id="NP_595381.3">
    <property type="nucleotide sequence ID" value="NM_001021288.3"/>
</dbReference>
<dbReference type="SMR" id="Q9P797"/>
<dbReference type="BioGRID" id="277842">
    <property type="interactions" value="16"/>
</dbReference>
<dbReference type="FunCoup" id="Q9P797">
    <property type="interactions" value="30"/>
</dbReference>
<dbReference type="IntAct" id="Q9P797">
    <property type="interactions" value="1"/>
</dbReference>
<dbReference type="STRING" id="284812.Q9P797"/>
<dbReference type="PaxDb" id="4896-SPBP35G2.06c.1"/>
<dbReference type="EnsemblFungi" id="SPBP35G2.06c.1">
    <property type="protein sequence ID" value="SPBP35G2.06c.1:pep"/>
    <property type="gene ID" value="SPBP35G2.06c"/>
</dbReference>
<dbReference type="GeneID" id="2541330"/>
<dbReference type="KEGG" id="spo:2541330"/>
<dbReference type="PomBase" id="SPBP35G2.06c">
    <property type="gene designation" value="nup131"/>
</dbReference>
<dbReference type="VEuPathDB" id="FungiDB:SPBP35G2.06c"/>
<dbReference type="eggNOG" id="KOG4121">
    <property type="taxonomic scope" value="Eukaryota"/>
</dbReference>
<dbReference type="HOGENOM" id="CLU_008657_0_0_1"/>
<dbReference type="InParanoid" id="Q9P797"/>
<dbReference type="OMA" id="NADIYIW"/>
<dbReference type="Reactome" id="R-SPO-159227">
    <property type="pathway name" value="Transport of the SLBP independent Mature mRNA"/>
</dbReference>
<dbReference type="Reactome" id="R-SPO-159231">
    <property type="pathway name" value="Transport of Mature mRNA Derived from an Intronless Transcript"/>
</dbReference>
<dbReference type="Reactome" id="R-SPO-159236">
    <property type="pathway name" value="Transport of Mature mRNA derived from an Intron-Containing Transcript"/>
</dbReference>
<dbReference type="Reactome" id="R-SPO-3371453">
    <property type="pathway name" value="Regulation of HSF1-mediated heat shock response"/>
</dbReference>
<dbReference type="Reactome" id="R-SPO-4085377">
    <property type="pathway name" value="SUMOylation of SUMOylation proteins"/>
</dbReference>
<dbReference type="Reactome" id="R-SPO-4551638">
    <property type="pathway name" value="SUMOylation of chromatin organization proteins"/>
</dbReference>
<dbReference type="Reactome" id="R-SPO-4570464">
    <property type="pathway name" value="SUMOylation of RNA binding proteins"/>
</dbReference>
<dbReference type="Reactome" id="R-SPO-5578749">
    <property type="pathway name" value="Transcriptional regulation by small RNAs"/>
</dbReference>
<dbReference type="Reactome" id="R-SPO-9615933">
    <property type="pathway name" value="Postmitotic nuclear pore complex (NPC) reformation"/>
</dbReference>
<dbReference type="PRO" id="PR:Q9P797"/>
<dbReference type="Proteomes" id="UP000002485">
    <property type="component" value="Chromosome II"/>
</dbReference>
<dbReference type="GO" id="GO:0032153">
    <property type="term" value="C:cell division site"/>
    <property type="evidence" value="ECO:0007005"/>
    <property type="project" value="PomBase"/>
</dbReference>
<dbReference type="GO" id="GO:0005737">
    <property type="term" value="C:cytoplasm"/>
    <property type="evidence" value="ECO:0000314"/>
    <property type="project" value="PomBase"/>
</dbReference>
<dbReference type="GO" id="GO:0005829">
    <property type="term" value="C:cytosol"/>
    <property type="evidence" value="ECO:0007005"/>
    <property type="project" value="PomBase"/>
</dbReference>
<dbReference type="GO" id="GO:0005635">
    <property type="term" value="C:nuclear envelope"/>
    <property type="evidence" value="ECO:0007005"/>
    <property type="project" value="PomBase"/>
</dbReference>
<dbReference type="GO" id="GO:0005643">
    <property type="term" value="C:nuclear pore"/>
    <property type="evidence" value="ECO:0000314"/>
    <property type="project" value="PomBase"/>
</dbReference>
<dbReference type="GO" id="GO:0031080">
    <property type="term" value="C:nuclear pore outer ring"/>
    <property type="evidence" value="ECO:0000314"/>
    <property type="project" value="PomBase"/>
</dbReference>
<dbReference type="GO" id="GO:0017056">
    <property type="term" value="F:structural constituent of nuclear pore"/>
    <property type="evidence" value="ECO:0000318"/>
    <property type="project" value="GO_Central"/>
</dbReference>
<dbReference type="GO" id="GO:0016973">
    <property type="term" value="P:poly(A)+ mRNA export from nucleus"/>
    <property type="evidence" value="ECO:0000318"/>
    <property type="project" value="GO_Central"/>
</dbReference>
<dbReference type="GO" id="GO:0006606">
    <property type="term" value="P:protein import into nucleus"/>
    <property type="evidence" value="ECO:0000318"/>
    <property type="project" value="GO_Central"/>
</dbReference>
<dbReference type="GO" id="GO:0000972">
    <property type="term" value="P:transcription-dependent tethering of RNA polymerase II gene DNA at nuclear periphery"/>
    <property type="evidence" value="ECO:0000318"/>
    <property type="project" value="GO_Central"/>
</dbReference>
<dbReference type="Gene3D" id="1.20.58.1380">
    <property type="match status" value="1"/>
</dbReference>
<dbReference type="Gene3D" id="2.130.10.10">
    <property type="entry name" value="YVTN repeat-like/Quinoprotein amine dehydrogenase"/>
    <property type="match status" value="1"/>
</dbReference>
<dbReference type="InterPro" id="IPR014908">
    <property type="entry name" value="Nucleoporin_Nup133/Nup155_N"/>
</dbReference>
<dbReference type="InterPro" id="IPR037624">
    <property type="entry name" value="Nup133-like"/>
</dbReference>
<dbReference type="InterPro" id="IPR015943">
    <property type="entry name" value="WD40/YVTN_repeat-like_dom_sf"/>
</dbReference>
<dbReference type="PANTHER" id="PTHR13405">
    <property type="entry name" value="NUCLEAR PORE COMPLEX PROTEIN NUP133"/>
    <property type="match status" value="1"/>
</dbReference>
<dbReference type="PANTHER" id="PTHR13405:SF11">
    <property type="entry name" value="NUCLEAR PORE COMPLEX PROTEIN NUP133"/>
    <property type="match status" value="1"/>
</dbReference>
<dbReference type="Pfam" id="PF08801">
    <property type="entry name" value="Nucleoporin_N"/>
    <property type="match status" value="1"/>
</dbReference>
<dbReference type="SUPFAM" id="SSF117289">
    <property type="entry name" value="Nucleoporin domain"/>
    <property type="match status" value="1"/>
</dbReference>
<sequence length="1142" mass="131440">MFIVHRRFFQNEKAFTPAGKHEKVADGNKHETLATSEYPKVCASNDLYKILQISAPKVGNFTIHDAPVVGLIDSILEYYLYISVKVRKAWIAGYGSQPQNLICFDWERFTGILDQQSLNSPPLAGFVKPDPTSAEPGFLLLWPASGDLFYWERTSLMNVEVSAPEFPGFLHYRIQLKRYESCKNLVSAEPAGFFLTLSSGRLLHLNLKDSDGNSSIQVRILFPGLHIPNCLLSLYNSIFAFTSGRVIPIRCGSIKGPGERLVYSMHSGSTLRIWEIFGTGDHHLLRGFDIYDIILDSIQESFSYVNRFLILDFSVSTSDPYTLACLVSWRDNASLFNYAAIIISFNHQMIPHVSQFCHVRSYLSAILPSVCRIFLPSPGTVVFCVFDVTFAMFHKVRGKEGTFYVEENLVVNNLTSKSRVLDFGMEDAIYEKSTHTLLKTPALILLTEGHGIIRIESSASYLKTSFSATTYLRSRLSQFASQSPLFREQFLLNFDFTYNLSESEVYNTVFNLCDELYTTPCKKNMSVLETLHSQQRDLMEIVLVAFKYLHLSPSNRLQLWLKVAYCSALADLYELLMCNEKMSNLLRRVLKIMSSNDNIDELFLKKCLNINLLLQHLSSEYSQISGQDASNAQKRIEVIVNVNNVYGTIFGNELAYRQEKISKFTDPSSVIRSDLWTVEVDHLDLLRKQIEDSISLHRDVRDSKDAHILKVSNKLRKQILHLVEQNCLLIFDLHNGTDDTIVKSHNFQKFEEEFGNSRKEWLQYLASVGYLEKAIDLAEKVKDFQTMVILLDCLDPKDPTIKLQKQKACLNKYKEEFADVIFFYLVDTEQYASLLHDFLEYQSLLISFFEANDLLNLLWIFEAQNGNYGRASEILFRDCEPEENRIIGKISQLALAKLYSWTNRIEGENIILSNETEVIENHLAILLIQEQYAEMLSSLVDITEDEGEAVEAIVTSNCVNLSENSIRAWLVSSAVERLIQNEYTTLCEMVDFFSSFSLRECSFKEVDLALELLERATITKDVYFYLKDLVYRRFLLQVNWAEIIDAHEDLESSFFPMVKEIMLESDFLIWLQHMEHNIHDESKHYLKSEKNFLQSVYSSLSESQVEDYQMELFREKQIFSVLCKDRELYILIPKLLDVATKQ</sequence>